<name>ZN226_HUMAN</name>
<organism>
    <name type="scientific">Homo sapiens</name>
    <name type="common">Human</name>
    <dbReference type="NCBI Taxonomy" id="9606"/>
    <lineage>
        <taxon>Eukaryota</taxon>
        <taxon>Metazoa</taxon>
        <taxon>Chordata</taxon>
        <taxon>Craniata</taxon>
        <taxon>Vertebrata</taxon>
        <taxon>Euteleostomi</taxon>
        <taxon>Mammalia</taxon>
        <taxon>Eutheria</taxon>
        <taxon>Euarchontoglires</taxon>
        <taxon>Primates</taxon>
        <taxon>Haplorrhini</taxon>
        <taxon>Catarrhini</taxon>
        <taxon>Hominidae</taxon>
        <taxon>Homo</taxon>
    </lineage>
</organism>
<evidence type="ECO:0000255" key="1">
    <source>
        <dbReference type="PROSITE-ProRule" id="PRU00042"/>
    </source>
</evidence>
<evidence type="ECO:0000255" key="2">
    <source>
        <dbReference type="PROSITE-ProRule" id="PRU00119"/>
    </source>
</evidence>
<evidence type="ECO:0000256" key="3">
    <source>
        <dbReference type="SAM" id="MobiDB-lite"/>
    </source>
</evidence>
<evidence type="ECO:0000303" key="4">
    <source>
    </source>
</evidence>
<evidence type="ECO:0000305" key="5"/>
<reference key="1">
    <citation type="journal article" date="2003" name="Genome Res.">
        <title>Differential expansion of zinc-finger transcription factor loci in homologous human and mouse gene clusters.</title>
        <authorList>
            <person name="Shannon M."/>
            <person name="Hamilton A.T."/>
            <person name="Gordon L."/>
            <person name="Branscomb E."/>
            <person name="Stubbs L."/>
        </authorList>
    </citation>
    <scope>NUCLEOTIDE SEQUENCE [MRNA] (ISOFORM 1)</scope>
</reference>
<reference key="2">
    <citation type="journal article" date="2004" name="Nat. Genet.">
        <title>Complete sequencing and characterization of 21,243 full-length human cDNAs.</title>
        <authorList>
            <person name="Ota T."/>
            <person name="Suzuki Y."/>
            <person name="Nishikawa T."/>
            <person name="Otsuki T."/>
            <person name="Sugiyama T."/>
            <person name="Irie R."/>
            <person name="Wakamatsu A."/>
            <person name="Hayashi K."/>
            <person name="Sato H."/>
            <person name="Nagai K."/>
            <person name="Kimura K."/>
            <person name="Makita H."/>
            <person name="Sekine M."/>
            <person name="Obayashi M."/>
            <person name="Nishi T."/>
            <person name="Shibahara T."/>
            <person name="Tanaka T."/>
            <person name="Ishii S."/>
            <person name="Yamamoto J."/>
            <person name="Saito K."/>
            <person name="Kawai Y."/>
            <person name="Isono Y."/>
            <person name="Nakamura Y."/>
            <person name="Nagahari K."/>
            <person name="Murakami K."/>
            <person name="Yasuda T."/>
            <person name="Iwayanagi T."/>
            <person name="Wagatsuma M."/>
            <person name="Shiratori A."/>
            <person name="Sudo H."/>
            <person name="Hosoiri T."/>
            <person name="Kaku Y."/>
            <person name="Kodaira H."/>
            <person name="Kondo H."/>
            <person name="Sugawara M."/>
            <person name="Takahashi M."/>
            <person name="Kanda K."/>
            <person name="Yokoi T."/>
            <person name="Furuya T."/>
            <person name="Kikkawa E."/>
            <person name="Omura Y."/>
            <person name="Abe K."/>
            <person name="Kamihara K."/>
            <person name="Katsuta N."/>
            <person name="Sato K."/>
            <person name="Tanikawa M."/>
            <person name="Yamazaki M."/>
            <person name="Ninomiya K."/>
            <person name="Ishibashi T."/>
            <person name="Yamashita H."/>
            <person name="Murakawa K."/>
            <person name="Fujimori K."/>
            <person name="Tanai H."/>
            <person name="Kimata M."/>
            <person name="Watanabe M."/>
            <person name="Hiraoka S."/>
            <person name="Chiba Y."/>
            <person name="Ishida S."/>
            <person name="Ono Y."/>
            <person name="Takiguchi S."/>
            <person name="Watanabe S."/>
            <person name="Yosida M."/>
            <person name="Hotuta T."/>
            <person name="Kusano J."/>
            <person name="Kanehori K."/>
            <person name="Takahashi-Fujii A."/>
            <person name="Hara H."/>
            <person name="Tanase T.-O."/>
            <person name="Nomura Y."/>
            <person name="Togiya S."/>
            <person name="Komai F."/>
            <person name="Hara R."/>
            <person name="Takeuchi K."/>
            <person name="Arita M."/>
            <person name="Imose N."/>
            <person name="Musashino K."/>
            <person name="Yuuki H."/>
            <person name="Oshima A."/>
            <person name="Sasaki N."/>
            <person name="Aotsuka S."/>
            <person name="Yoshikawa Y."/>
            <person name="Matsunawa H."/>
            <person name="Ichihara T."/>
            <person name="Shiohata N."/>
            <person name="Sano S."/>
            <person name="Moriya S."/>
            <person name="Momiyama H."/>
            <person name="Satoh N."/>
            <person name="Takami S."/>
            <person name="Terashima Y."/>
            <person name="Suzuki O."/>
            <person name="Nakagawa S."/>
            <person name="Senoh A."/>
            <person name="Mizoguchi H."/>
            <person name="Goto Y."/>
            <person name="Shimizu F."/>
            <person name="Wakebe H."/>
            <person name="Hishigaki H."/>
            <person name="Watanabe T."/>
            <person name="Sugiyama A."/>
            <person name="Takemoto M."/>
            <person name="Kawakami B."/>
            <person name="Yamazaki M."/>
            <person name="Watanabe K."/>
            <person name="Kumagai A."/>
            <person name="Itakura S."/>
            <person name="Fukuzumi Y."/>
            <person name="Fujimori Y."/>
            <person name="Komiyama M."/>
            <person name="Tashiro H."/>
            <person name="Tanigami A."/>
            <person name="Fujiwara T."/>
            <person name="Ono T."/>
            <person name="Yamada K."/>
            <person name="Fujii Y."/>
            <person name="Ozaki K."/>
            <person name="Hirao M."/>
            <person name="Ohmori Y."/>
            <person name="Kawabata A."/>
            <person name="Hikiji T."/>
            <person name="Kobatake N."/>
            <person name="Inagaki H."/>
            <person name="Ikema Y."/>
            <person name="Okamoto S."/>
            <person name="Okitani R."/>
            <person name="Kawakami T."/>
            <person name="Noguchi S."/>
            <person name="Itoh T."/>
            <person name="Shigeta K."/>
            <person name="Senba T."/>
            <person name="Matsumura K."/>
            <person name="Nakajima Y."/>
            <person name="Mizuno T."/>
            <person name="Morinaga M."/>
            <person name="Sasaki M."/>
            <person name="Togashi T."/>
            <person name="Oyama M."/>
            <person name="Hata H."/>
            <person name="Watanabe M."/>
            <person name="Komatsu T."/>
            <person name="Mizushima-Sugano J."/>
            <person name="Satoh T."/>
            <person name="Shirai Y."/>
            <person name="Takahashi Y."/>
            <person name="Nakagawa K."/>
            <person name="Okumura K."/>
            <person name="Nagase T."/>
            <person name="Nomura N."/>
            <person name="Kikuchi H."/>
            <person name="Masuho Y."/>
            <person name="Yamashita R."/>
            <person name="Nakai K."/>
            <person name="Yada T."/>
            <person name="Nakamura Y."/>
            <person name="Ohara O."/>
            <person name="Isogai T."/>
            <person name="Sugano S."/>
        </authorList>
    </citation>
    <scope>NUCLEOTIDE SEQUENCE [LARGE SCALE MRNA] (ISOFORM 1)</scope>
</reference>
<reference key="3">
    <citation type="journal article" date="2004" name="Nature">
        <title>The DNA sequence and biology of human chromosome 19.</title>
        <authorList>
            <person name="Grimwood J."/>
            <person name="Gordon L.A."/>
            <person name="Olsen A.S."/>
            <person name="Terry A."/>
            <person name="Schmutz J."/>
            <person name="Lamerdin J.E."/>
            <person name="Hellsten U."/>
            <person name="Goodstein D."/>
            <person name="Couronne O."/>
            <person name="Tran-Gyamfi M."/>
            <person name="Aerts A."/>
            <person name="Altherr M."/>
            <person name="Ashworth L."/>
            <person name="Bajorek E."/>
            <person name="Black S."/>
            <person name="Branscomb E."/>
            <person name="Caenepeel S."/>
            <person name="Carrano A.V."/>
            <person name="Caoile C."/>
            <person name="Chan Y.M."/>
            <person name="Christensen M."/>
            <person name="Cleland C.A."/>
            <person name="Copeland A."/>
            <person name="Dalin E."/>
            <person name="Dehal P."/>
            <person name="Denys M."/>
            <person name="Detter J.C."/>
            <person name="Escobar J."/>
            <person name="Flowers D."/>
            <person name="Fotopulos D."/>
            <person name="Garcia C."/>
            <person name="Georgescu A.M."/>
            <person name="Glavina T."/>
            <person name="Gomez M."/>
            <person name="Gonzales E."/>
            <person name="Groza M."/>
            <person name="Hammon N."/>
            <person name="Hawkins T."/>
            <person name="Haydu L."/>
            <person name="Ho I."/>
            <person name="Huang W."/>
            <person name="Israni S."/>
            <person name="Jett J."/>
            <person name="Kadner K."/>
            <person name="Kimball H."/>
            <person name="Kobayashi A."/>
            <person name="Larionov V."/>
            <person name="Leem S.-H."/>
            <person name="Lopez F."/>
            <person name="Lou Y."/>
            <person name="Lowry S."/>
            <person name="Malfatti S."/>
            <person name="Martinez D."/>
            <person name="McCready P.M."/>
            <person name="Medina C."/>
            <person name="Morgan J."/>
            <person name="Nelson K."/>
            <person name="Nolan M."/>
            <person name="Ovcharenko I."/>
            <person name="Pitluck S."/>
            <person name="Pollard M."/>
            <person name="Popkie A.P."/>
            <person name="Predki P."/>
            <person name="Quan G."/>
            <person name="Ramirez L."/>
            <person name="Rash S."/>
            <person name="Retterer J."/>
            <person name="Rodriguez A."/>
            <person name="Rogers S."/>
            <person name="Salamov A."/>
            <person name="Salazar A."/>
            <person name="She X."/>
            <person name="Smith D."/>
            <person name="Slezak T."/>
            <person name="Solovyev V."/>
            <person name="Thayer N."/>
            <person name="Tice H."/>
            <person name="Tsai M."/>
            <person name="Ustaszewska A."/>
            <person name="Vo N."/>
            <person name="Wagner M."/>
            <person name="Wheeler J."/>
            <person name="Wu K."/>
            <person name="Xie G."/>
            <person name="Yang J."/>
            <person name="Dubchak I."/>
            <person name="Furey T.S."/>
            <person name="DeJong P."/>
            <person name="Dickson M."/>
            <person name="Gordon D."/>
            <person name="Eichler E.E."/>
            <person name="Pennacchio L.A."/>
            <person name="Richardson P."/>
            <person name="Stubbs L."/>
            <person name="Rokhsar D.S."/>
            <person name="Myers R.M."/>
            <person name="Rubin E.M."/>
            <person name="Lucas S.M."/>
        </authorList>
    </citation>
    <scope>NUCLEOTIDE SEQUENCE [LARGE SCALE GENOMIC DNA]</scope>
</reference>
<reference key="4">
    <citation type="submission" date="2005-07" db="EMBL/GenBank/DDBJ databases">
        <authorList>
            <person name="Mural R.J."/>
            <person name="Istrail S."/>
            <person name="Sutton G."/>
            <person name="Florea L."/>
            <person name="Halpern A.L."/>
            <person name="Mobarry C.M."/>
            <person name="Lippert R."/>
            <person name="Walenz B."/>
            <person name="Shatkay H."/>
            <person name="Dew I."/>
            <person name="Miller J.R."/>
            <person name="Flanigan M.J."/>
            <person name="Edwards N.J."/>
            <person name="Bolanos R."/>
            <person name="Fasulo D."/>
            <person name="Halldorsson B.V."/>
            <person name="Hannenhalli S."/>
            <person name="Turner R."/>
            <person name="Yooseph S."/>
            <person name="Lu F."/>
            <person name="Nusskern D.R."/>
            <person name="Shue B.C."/>
            <person name="Zheng X.H."/>
            <person name="Zhong F."/>
            <person name="Delcher A.L."/>
            <person name="Huson D.H."/>
            <person name="Kravitz S.A."/>
            <person name="Mouchard L."/>
            <person name="Reinert K."/>
            <person name="Remington K.A."/>
            <person name="Clark A.G."/>
            <person name="Waterman M.S."/>
            <person name="Eichler E.E."/>
            <person name="Adams M.D."/>
            <person name="Hunkapiller M.W."/>
            <person name="Myers E.W."/>
            <person name="Venter J.C."/>
        </authorList>
    </citation>
    <scope>NUCLEOTIDE SEQUENCE [LARGE SCALE GENOMIC DNA]</scope>
</reference>
<reference key="5">
    <citation type="journal article" date="2004" name="Genome Res.">
        <title>The status, quality, and expansion of the NIH full-length cDNA project: the Mammalian Gene Collection (MGC).</title>
        <authorList>
            <consortium name="The MGC Project Team"/>
        </authorList>
    </citation>
    <scope>NUCLEOTIDE SEQUENCE [LARGE SCALE MRNA] (ISOFORMS 1 AND 2)</scope>
    <source>
        <tissue>Lung</tissue>
        <tissue>Muscle</tissue>
    </source>
</reference>
<accession>Q9NYT6</accession>
<accession>Q8WWE6</accession>
<accession>Q96TE6</accession>
<accession>Q9NS44</accession>
<keyword id="KW-0025">Alternative splicing</keyword>
<keyword id="KW-0238">DNA-binding</keyword>
<keyword id="KW-0479">Metal-binding</keyword>
<keyword id="KW-0539">Nucleus</keyword>
<keyword id="KW-1267">Proteomics identification</keyword>
<keyword id="KW-1185">Reference proteome</keyword>
<keyword id="KW-0677">Repeat</keyword>
<keyword id="KW-0804">Transcription</keyword>
<keyword id="KW-0805">Transcription regulation</keyword>
<keyword id="KW-0862">Zinc</keyword>
<keyword id="KW-0863">Zinc-finger</keyword>
<comment type="function">
    <text>May be involved in transcriptional regulation.</text>
</comment>
<comment type="subcellular location">
    <subcellularLocation>
        <location evidence="5">Nucleus</location>
    </subcellularLocation>
</comment>
<comment type="alternative products">
    <event type="alternative splicing"/>
    <isoform>
        <id>Q9NYT6-1</id>
        <name>1</name>
        <sequence type="displayed"/>
    </isoform>
    <isoform>
        <id>Q9NYT6-2</id>
        <name>2</name>
        <sequence type="described" ref="VSP_046853 VSP_046854"/>
    </isoform>
</comment>
<comment type="similarity">
    <text evidence="5">Belongs to the krueppel C2H2-type zinc-finger protein family.</text>
</comment>
<gene>
    <name type="primary">ZNF226</name>
</gene>
<sequence>MNMFKEAVTFKDVAVAFTEEELGLLGPAQRKLYRDVMVENFRNLLSVGHPPFKQDVSPIERNEQLWIMTTATRRQGNLGEKNQSKLITVQDRESEEELSCWQIWQQIANDLTRCQDSMINNSQCHKQGDFPYQVGTELSIQISEDENYIVNKADGPNNTGNPEFPILRTQDSWRKTFLTESQRLNRDQQISIKNKLCQCKKGVDPIGWISHHDGHRVHKSEKSYRPNDYEKDNMKILTFDHNSMIHTGQKSYQCNECKKPFSDLSSFDLHQQLQSGEKSLTCVERGKGFCYSPVLPVHQKVHVGEKLKCDECGKEFSQGAHLQTHQKVHVIEKPYKCKQCGKGFSRRSALNVHCKVHTAEKPYNCEECGRAFSQASHLQDHQRLHTGEKPFKCDACGKSFSRNSHLQSHQRVHTGEKPYKCEECGKGFICSSNLYIHQRVHTGEKPYKCEECGKGFSRPSSLQAHQGVHTGEKSYICTVCGKGFTLSSNLQAHQRVHTGEKPYKCNECGKSFRRNSHYQVHLVVHTGEKPYKCEICGKGFSQSSYLQIHQKAHSIEKPFKCEECGQGFNQSSRLQIHQLIHTGEKPYKCEECGKGFSRRADLKIHCRIHTGEKPYNCEECGKVFRQASNLLAHQRVHSGEKPFKCEECGKSFGRSAHLQAHQKVHTGDKPYKCDECGKGFKWSLNLDMHQRVHTGEKPYKCGECGKYFSQASSLQLHQSVHTGEKPYKCDVCGKVFSRSSQLQSHQRVHTGEKPYKCEICGKSFSWRSNLTVHHRIHVGDKSYKSNRGGKNIRESTQEKKSIK</sequence>
<protein>
    <recommendedName>
        <fullName>Zinc finger protein 226</fullName>
    </recommendedName>
</protein>
<dbReference type="EMBL" id="AF228418">
    <property type="protein sequence ID" value="AAF34786.1"/>
    <property type="molecule type" value="mRNA"/>
</dbReference>
<dbReference type="EMBL" id="AK023091">
    <property type="protein sequence ID" value="BAB14398.1"/>
    <property type="molecule type" value="mRNA"/>
</dbReference>
<dbReference type="EMBL" id="AC074331">
    <property type="protein sequence ID" value="AAF88103.1"/>
    <property type="molecule type" value="Genomic_DNA"/>
</dbReference>
<dbReference type="EMBL" id="AC138470">
    <property type="status" value="NOT_ANNOTATED_CDS"/>
    <property type="molecule type" value="Genomic_DNA"/>
</dbReference>
<dbReference type="EMBL" id="CH471126">
    <property type="protein sequence ID" value="EAW57259.1"/>
    <property type="molecule type" value="Genomic_DNA"/>
</dbReference>
<dbReference type="EMBL" id="BC017786">
    <property type="protein sequence ID" value="AAH17786.1"/>
    <property type="molecule type" value="mRNA"/>
</dbReference>
<dbReference type="EMBL" id="BC024197">
    <property type="protein sequence ID" value="AAH24197.1"/>
    <property type="molecule type" value="mRNA"/>
</dbReference>
<dbReference type="CCDS" id="CCDS46102.1">
    <molecule id="Q9NYT6-1"/>
</dbReference>
<dbReference type="CCDS" id="CCDS46103.1">
    <molecule id="Q9NYT6-2"/>
</dbReference>
<dbReference type="RefSeq" id="NP_001027544.1">
    <molecule id="Q9NYT6-1"/>
    <property type="nucleotide sequence ID" value="NM_001032372.2"/>
</dbReference>
<dbReference type="RefSeq" id="NP_001027545.1">
    <molecule id="Q9NYT6-1"/>
    <property type="nucleotide sequence ID" value="NM_001032373.2"/>
</dbReference>
<dbReference type="RefSeq" id="NP_001027546.1">
    <molecule id="Q9NYT6-2"/>
    <property type="nucleotide sequence ID" value="NM_001032374.2"/>
</dbReference>
<dbReference type="RefSeq" id="NP_001139692.1">
    <molecule id="Q9NYT6-2"/>
    <property type="nucleotide sequence ID" value="NM_001146220.3"/>
</dbReference>
<dbReference type="RefSeq" id="NP_001306017.1">
    <molecule id="Q9NYT6-1"/>
    <property type="nucleotide sequence ID" value="NM_001319088.2"/>
</dbReference>
<dbReference type="RefSeq" id="NP_001306018.1">
    <molecule id="Q9NYT6-1"/>
    <property type="nucleotide sequence ID" value="NM_001319089.2"/>
</dbReference>
<dbReference type="RefSeq" id="NP_001306019.1">
    <molecule id="Q9NYT6-1"/>
    <property type="nucleotide sequence ID" value="NM_001319090.2"/>
</dbReference>
<dbReference type="RefSeq" id="NP_001375097.1">
    <molecule id="Q9NYT6-1"/>
    <property type="nucleotide sequence ID" value="NM_001388168.1"/>
</dbReference>
<dbReference type="RefSeq" id="NP_001375098.1">
    <molecule id="Q9NYT6-1"/>
    <property type="nucleotide sequence ID" value="NM_001388169.1"/>
</dbReference>
<dbReference type="RefSeq" id="NP_001375099.1">
    <molecule id="Q9NYT6-1"/>
    <property type="nucleotide sequence ID" value="NM_001388170.1"/>
</dbReference>
<dbReference type="RefSeq" id="NP_001375100.1">
    <molecule id="Q9NYT6-1"/>
    <property type="nucleotide sequence ID" value="NM_001388171.1"/>
</dbReference>
<dbReference type="RefSeq" id="NP_001375101.1">
    <molecule id="Q9NYT6-1"/>
    <property type="nucleotide sequence ID" value="NM_001388172.1"/>
</dbReference>
<dbReference type="RefSeq" id="NP_001375102.1">
    <molecule id="Q9NYT6-2"/>
    <property type="nucleotide sequence ID" value="NM_001388173.1"/>
</dbReference>
<dbReference type="RefSeq" id="NP_001375103.1">
    <molecule id="Q9NYT6-2"/>
    <property type="nucleotide sequence ID" value="NM_001388174.1"/>
</dbReference>
<dbReference type="RefSeq" id="NP_001375104.1">
    <molecule id="Q9NYT6-2"/>
    <property type="nucleotide sequence ID" value="NM_001388175.1"/>
</dbReference>
<dbReference type="RefSeq" id="NP_001375105.1">
    <molecule id="Q9NYT6-2"/>
    <property type="nucleotide sequence ID" value="NM_001388176.1"/>
</dbReference>
<dbReference type="RefSeq" id="NP_001375106.1">
    <molecule id="Q9NYT6-2"/>
    <property type="nucleotide sequence ID" value="NM_001388177.1"/>
</dbReference>
<dbReference type="RefSeq" id="NP_057003.2">
    <molecule id="Q9NYT6-2"/>
    <property type="nucleotide sequence ID" value="NM_015919.3"/>
</dbReference>
<dbReference type="RefSeq" id="NP_057528.2">
    <molecule id="Q9NYT6-1"/>
    <property type="nucleotide sequence ID" value="NM_016444.3"/>
</dbReference>
<dbReference type="RefSeq" id="XP_005259284.1">
    <property type="nucleotide sequence ID" value="XM_005259227.2"/>
</dbReference>
<dbReference type="RefSeq" id="XP_006723430.1">
    <molecule id="Q9NYT6-1"/>
    <property type="nucleotide sequence ID" value="XM_006723367.4"/>
</dbReference>
<dbReference type="RefSeq" id="XP_006723431.1">
    <molecule id="Q9NYT6-1"/>
    <property type="nucleotide sequence ID" value="XM_006723368.4"/>
</dbReference>
<dbReference type="RefSeq" id="XP_006723432.1">
    <property type="nucleotide sequence ID" value="XM_006723369.2"/>
</dbReference>
<dbReference type="RefSeq" id="XP_016882751.1">
    <property type="nucleotide sequence ID" value="XM_017027262.1"/>
</dbReference>
<dbReference type="RefSeq" id="XP_016882754.1">
    <molecule id="Q9NYT6-2"/>
    <property type="nucleotide sequence ID" value="XM_017027265.2"/>
</dbReference>
<dbReference type="RefSeq" id="XP_047295330.1">
    <molecule id="Q9NYT6-1"/>
    <property type="nucleotide sequence ID" value="XM_047439374.1"/>
</dbReference>
<dbReference type="RefSeq" id="XP_047295331.1">
    <molecule id="Q9NYT6-2"/>
    <property type="nucleotide sequence ID" value="XM_047439375.1"/>
</dbReference>
<dbReference type="RefSeq" id="XP_047295332.1">
    <molecule id="Q9NYT6-2"/>
    <property type="nucleotide sequence ID" value="XM_047439376.1"/>
</dbReference>
<dbReference type="RefSeq" id="XP_054178005.1">
    <molecule id="Q9NYT6-1"/>
    <property type="nucleotide sequence ID" value="XM_054322030.1"/>
</dbReference>
<dbReference type="RefSeq" id="XP_054178006.1">
    <molecule id="Q9NYT6-1"/>
    <property type="nucleotide sequence ID" value="XM_054322031.1"/>
</dbReference>
<dbReference type="RefSeq" id="XP_054178007.1">
    <molecule id="Q9NYT6-1"/>
    <property type="nucleotide sequence ID" value="XM_054322032.1"/>
</dbReference>
<dbReference type="RefSeq" id="XP_054178008.1">
    <molecule id="Q9NYT6-2"/>
    <property type="nucleotide sequence ID" value="XM_054322033.1"/>
</dbReference>
<dbReference type="RefSeq" id="XP_054178009.1">
    <molecule id="Q9NYT6-2"/>
    <property type="nucleotide sequence ID" value="XM_054322034.1"/>
</dbReference>
<dbReference type="RefSeq" id="XP_054178010.1">
    <molecule id="Q9NYT6-2"/>
    <property type="nucleotide sequence ID" value="XM_054322035.1"/>
</dbReference>
<dbReference type="SMR" id="Q9NYT6"/>
<dbReference type="BioGRID" id="113552">
    <property type="interactions" value="11"/>
</dbReference>
<dbReference type="FunCoup" id="Q9NYT6">
    <property type="interactions" value="48"/>
</dbReference>
<dbReference type="IntAct" id="Q9NYT6">
    <property type="interactions" value="5"/>
</dbReference>
<dbReference type="MINT" id="Q9NYT6"/>
<dbReference type="STRING" id="9606.ENSP00000465121"/>
<dbReference type="iPTMnet" id="Q9NYT6"/>
<dbReference type="PhosphoSitePlus" id="Q9NYT6"/>
<dbReference type="BioMuta" id="ZNF226"/>
<dbReference type="DMDM" id="20178347"/>
<dbReference type="jPOST" id="Q9NYT6"/>
<dbReference type="MassIVE" id="Q9NYT6"/>
<dbReference type="PaxDb" id="9606-ENSP00000465121"/>
<dbReference type="PeptideAtlas" id="Q9NYT6"/>
<dbReference type="ProteomicsDB" id="74878"/>
<dbReference type="ProteomicsDB" id="83275">
    <molecule id="Q9NYT6-1"/>
</dbReference>
<dbReference type="Antibodypedia" id="31162">
    <property type="antibodies" value="128 antibodies from 18 providers"/>
</dbReference>
<dbReference type="DNASU" id="7769"/>
<dbReference type="Ensembl" id="ENST00000300823.10">
    <molecule id="Q9NYT6-2"/>
    <property type="protein sequence ID" value="ENSP00000300823.5"/>
    <property type="gene ID" value="ENSG00000167380.17"/>
</dbReference>
<dbReference type="Ensembl" id="ENST00000337433.10">
    <molecule id="Q9NYT6-1"/>
    <property type="protein sequence ID" value="ENSP00000336719.5"/>
    <property type="gene ID" value="ENSG00000167380.17"/>
</dbReference>
<dbReference type="Ensembl" id="ENST00000413984.6">
    <molecule id="Q9NYT6-2"/>
    <property type="protein sequence ID" value="ENSP00000407474.1"/>
    <property type="gene ID" value="ENSG00000167380.17"/>
</dbReference>
<dbReference type="Ensembl" id="ENST00000454662.6">
    <molecule id="Q9NYT6-1"/>
    <property type="protein sequence ID" value="ENSP00000393265.1"/>
    <property type="gene ID" value="ENSG00000167380.17"/>
</dbReference>
<dbReference type="Ensembl" id="ENST00000588742.5">
    <molecule id="Q9NYT6-2"/>
    <property type="protein sequence ID" value="ENSP00000467003.1"/>
    <property type="gene ID" value="ENSG00000167380.17"/>
</dbReference>
<dbReference type="Ensembl" id="ENST00000590089.5">
    <molecule id="Q9NYT6-1"/>
    <property type="protein sequence ID" value="ENSP00000465121.1"/>
    <property type="gene ID" value="ENSG00000167380.17"/>
</dbReference>
<dbReference type="GeneID" id="7769"/>
<dbReference type="KEGG" id="hsa:7769"/>
<dbReference type="MANE-Select" id="ENST00000337433.10">
    <property type="protein sequence ID" value="ENSP00000336719.5"/>
    <property type="RefSeq nucleotide sequence ID" value="NM_001032373.2"/>
    <property type="RefSeq protein sequence ID" value="NP_001027545.1"/>
</dbReference>
<dbReference type="UCSC" id="uc002oyn.4">
    <molecule id="Q9NYT6-1"/>
    <property type="organism name" value="human"/>
</dbReference>
<dbReference type="AGR" id="HGNC:13019"/>
<dbReference type="CTD" id="7769"/>
<dbReference type="DisGeNET" id="7769"/>
<dbReference type="GeneCards" id="ZNF226"/>
<dbReference type="HGNC" id="HGNC:13019">
    <property type="gene designation" value="ZNF226"/>
</dbReference>
<dbReference type="HPA" id="ENSG00000167380">
    <property type="expression patterns" value="Low tissue specificity"/>
</dbReference>
<dbReference type="MalaCards" id="ZNF226"/>
<dbReference type="neXtProt" id="NX_Q9NYT6"/>
<dbReference type="OpenTargets" id="ENSG00000167380"/>
<dbReference type="PharmGKB" id="PA37598"/>
<dbReference type="VEuPathDB" id="HostDB:ENSG00000167380"/>
<dbReference type="eggNOG" id="KOG1721">
    <property type="taxonomic scope" value="Eukaryota"/>
</dbReference>
<dbReference type="GeneTree" id="ENSGT00940000162119"/>
<dbReference type="HOGENOM" id="CLU_002678_17_1_1"/>
<dbReference type="InParanoid" id="Q9NYT6"/>
<dbReference type="OMA" id="WISHHLD"/>
<dbReference type="OrthoDB" id="9411774at2759"/>
<dbReference type="PAN-GO" id="Q9NYT6">
    <property type="GO annotations" value="4 GO annotations based on evolutionary models"/>
</dbReference>
<dbReference type="PhylomeDB" id="Q9NYT6"/>
<dbReference type="TreeFam" id="TF350845"/>
<dbReference type="PathwayCommons" id="Q9NYT6"/>
<dbReference type="Reactome" id="R-HSA-212436">
    <property type="pathway name" value="Generic Transcription Pathway"/>
</dbReference>
<dbReference type="SignaLink" id="Q9NYT6"/>
<dbReference type="BioGRID-ORCS" id="7769">
    <property type="hits" value="15 hits in 1174 CRISPR screens"/>
</dbReference>
<dbReference type="ChiTaRS" id="ZNF226">
    <property type="organism name" value="human"/>
</dbReference>
<dbReference type="GenomeRNAi" id="7769"/>
<dbReference type="Pharos" id="Q9NYT6">
    <property type="development level" value="Tdark"/>
</dbReference>
<dbReference type="PRO" id="PR:Q9NYT6"/>
<dbReference type="Proteomes" id="UP000005640">
    <property type="component" value="Chromosome 19"/>
</dbReference>
<dbReference type="RNAct" id="Q9NYT6">
    <property type="molecule type" value="protein"/>
</dbReference>
<dbReference type="Bgee" id="ENSG00000167380">
    <property type="expression patterns" value="Expressed in tendon of biceps brachii and 183 other cell types or tissues"/>
</dbReference>
<dbReference type="ExpressionAtlas" id="Q9NYT6">
    <property type="expression patterns" value="baseline and differential"/>
</dbReference>
<dbReference type="GO" id="GO:0005634">
    <property type="term" value="C:nucleus"/>
    <property type="evidence" value="ECO:0000318"/>
    <property type="project" value="GO_Central"/>
</dbReference>
<dbReference type="GO" id="GO:0003677">
    <property type="term" value="F:DNA binding"/>
    <property type="evidence" value="ECO:0007669"/>
    <property type="project" value="UniProtKB-KW"/>
</dbReference>
<dbReference type="GO" id="GO:0008270">
    <property type="term" value="F:zinc ion binding"/>
    <property type="evidence" value="ECO:0007669"/>
    <property type="project" value="UniProtKB-KW"/>
</dbReference>
<dbReference type="GO" id="GO:0006357">
    <property type="term" value="P:regulation of transcription by RNA polymerase II"/>
    <property type="evidence" value="ECO:0000318"/>
    <property type="project" value="GO_Central"/>
</dbReference>
<dbReference type="CDD" id="cd07765">
    <property type="entry name" value="KRAB_A-box"/>
    <property type="match status" value="1"/>
</dbReference>
<dbReference type="FunFam" id="3.30.160.60:FF:000709">
    <property type="entry name" value="GDNF-inducible zinc finger protein 1"/>
    <property type="match status" value="1"/>
</dbReference>
<dbReference type="FunFam" id="3.30.160.60:FF:000274">
    <property type="entry name" value="zinc finger protein 16"/>
    <property type="match status" value="2"/>
</dbReference>
<dbReference type="FunFam" id="3.30.160.60:FF:000781">
    <property type="entry name" value="zinc finger protein 205 isoform X1"/>
    <property type="match status" value="1"/>
</dbReference>
<dbReference type="FunFam" id="3.30.160.60:FF:001702">
    <property type="entry name" value="Zinc finger protein 224"/>
    <property type="match status" value="1"/>
</dbReference>
<dbReference type="FunFam" id="3.30.160.60:FF:002236">
    <property type="entry name" value="Zinc finger protein 226"/>
    <property type="match status" value="1"/>
</dbReference>
<dbReference type="FunFam" id="3.30.160.60:FF:002239">
    <property type="entry name" value="Zinc finger protein 226"/>
    <property type="match status" value="1"/>
</dbReference>
<dbReference type="FunFam" id="3.30.160.60:FF:002367">
    <property type="entry name" value="zinc finger protein 226 isoform X2"/>
    <property type="match status" value="1"/>
</dbReference>
<dbReference type="FunFam" id="3.30.160.60:FF:001534">
    <property type="entry name" value="zinc finger protein 227 isoform X1"/>
    <property type="match status" value="1"/>
</dbReference>
<dbReference type="FunFam" id="3.30.160.60:FF:000623">
    <property type="entry name" value="Zinc finger protein 234"/>
    <property type="match status" value="1"/>
</dbReference>
<dbReference type="FunFam" id="3.30.160.60:FF:002343">
    <property type="entry name" value="Zinc finger protein 33A"/>
    <property type="match status" value="1"/>
</dbReference>
<dbReference type="FunFam" id="3.30.160.60:FF:000663">
    <property type="entry name" value="Zinc finger protein 45"/>
    <property type="match status" value="2"/>
</dbReference>
<dbReference type="FunFam" id="3.30.160.60:FF:002254">
    <property type="entry name" value="Zinc finger protein 540"/>
    <property type="match status" value="1"/>
</dbReference>
<dbReference type="FunFam" id="3.30.160.60:FF:000015">
    <property type="entry name" value="Zinc finger protein 569"/>
    <property type="match status" value="1"/>
</dbReference>
<dbReference type="FunFam" id="3.30.160.60:FF:002331">
    <property type="entry name" value="Zinc finger protein 672"/>
    <property type="match status" value="1"/>
</dbReference>
<dbReference type="FunFam" id="3.30.160.60:FF:002357">
    <property type="entry name" value="Zinc finger protein 782"/>
    <property type="match status" value="1"/>
</dbReference>
<dbReference type="FunFam" id="3.30.160.60:FF:000307">
    <property type="entry name" value="Zinc finger protein ZFP69 isoform 1"/>
    <property type="match status" value="1"/>
</dbReference>
<dbReference type="Gene3D" id="6.10.140.140">
    <property type="match status" value="1"/>
</dbReference>
<dbReference type="Gene3D" id="3.30.160.60">
    <property type="entry name" value="Classic Zinc Finger"/>
    <property type="match status" value="19"/>
</dbReference>
<dbReference type="InterPro" id="IPR001909">
    <property type="entry name" value="KRAB"/>
</dbReference>
<dbReference type="InterPro" id="IPR036051">
    <property type="entry name" value="KRAB_dom_sf"/>
</dbReference>
<dbReference type="InterPro" id="IPR036236">
    <property type="entry name" value="Znf_C2H2_sf"/>
</dbReference>
<dbReference type="InterPro" id="IPR013087">
    <property type="entry name" value="Znf_C2H2_type"/>
</dbReference>
<dbReference type="PANTHER" id="PTHR24381">
    <property type="entry name" value="ZINC FINGER PROTEIN"/>
    <property type="match status" value="1"/>
</dbReference>
<dbReference type="PANTHER" id="PTHR24381:SF452">
    <property type="entry name" value="ZINC FINGER PROTEIN 235-LIKE"/>
    <property type="match status" value="1"/>
</dbReference>
<dbReference type="Pfam" id="PF01352">
    <property type="entry name" value="KRAB"/>
    <property type="match status" value="1"/>
</dbReference>
<dbReference type="Pfam" id="PF00096">
    <property type="entry name" value="zf-C2H2"/>
    <property type="match status" value="18"/>
</dbReference>
<dbReference type="SMART" id="SM00349">
    <property type="entry name" value="KRAB"/>
    <property type="match status" value="1"/>
</dbReference>
<dbReference type="SMART" id="SM00355">
    <property type="entry name" value="ZnF_C2H2"/>
    <property type="match status" value="19"/>
</dbReference>
<dbReference type="SUPFAM" id="SSF57667">
    <property type="entry name" value="beta-beta-alpha zinc fingers"/>
    <property type="match status" value="10"/>
</dbReference>
<dbReference type="SUPFAM" id="SSF109640">
    <property type="entry name" value="KRAB domain (Kruppel-associated box)"/>
    <property type="match status" value="1"/>
</dbReference>
<dbReference type="PROSITE" id="PS50805">
    <property type="entry name" value="KRAB"/>
    <property type="match status" value="1"/>
</dbReference>
<dbReference type="PROSITE" id="PS00028">
    <property type="entry name" value="ZINC_FINGER_C2H2_1"/>
    <property type="match status" value="17"/>
</dbReference>
<dbReference type="PROSITE" id="PS50157">
    <property type="entry name" value="ZINC_FINGER_C2H2_2"/>
    <property type="match status" value="19"/>
</dbReference>
<feature type="chain" id="PRO_0000047467" description="Zinc finger protein 226">
    <location>
        <begin position="1"/>
        <end position="803"/>
    </location>
</feature>
<feature type="domain" description="KRAB" evidence="2">
    <location>
        <begin position="8"/>
        <end position="78"/>
    </location>
</feature>
<feature type="zinc finger region" description="C2H2-type 1; degenerate" evidence="1">
    <location>
        <begin position="252"/>
        <end position="274"/>
    </location>
</feature>
<feature type="zinc finger region" description="C2H2-type 2; degenerate" evidence="1">
    <location>
        <begin position="280"/>
        <end position="302"/>
    </location>
</feature>
<feature type="zinc finger region" description="C2H2-type 3" evidence="1">
    <location>
        <begin position="307"/>
        <end position="329"/>
    </location>
</feature>
<feature type="zinc finger region" description="C2H2-type 4" evidence="1">
    <location>
        <begin position="335"/>
        <end position="357"/>
    </location>
</feature>
<feature type="zinc finger region" description="C2H2-type 5" evidence="1">
    <location>
        <begin position="363"/>
        <end position="385"/>
    </location>
</feature>
<feature type="zinc finger region" description="C2H2-type 6" evidence="1">
    <location>
        <begin position="391"/>
        <end position="413"/>
    </location>
</feature>
<feature type="zinc finger region" description="C2H2-type 7" evidence="1">
    <location>
        <begin position="419"/>
        <end position="441"/>
    </location>
</feature>
<feature type="zinc finger region" description="C2H2-type 8" evidence="1">
    <location>
        <begin position="447"/>
        <end position="469"/>
    </location>
</feature>
<feature type="zinc finger region" description="C2H2-type 9" evidence="1">
    <location>
        <begin position="475"/>
        <end position="497"/>
    </location>
</feature>
<feature type="zinc finger region" description="C2H2-type 10" evidence="1">
    <location>
        <begin position="503"/>
        <end position="525"/>
    </location>
</feature>
<feature type="zinc finger region" description="C2H2-type 11" evidence="1">
    <location>
        <begin position="531"/>
        <end position="553"/>
    </location>
</feature>
<feature type="zinc finger region" description="C2H2-type 12" evidence="1">
    <location>
        <begin position="559"/>
        <end position="581"/>
    </location>
</feature>
<feature type="zinc finger region" description="C2H2-type 13" evidence="1">
    <location>
        <begin position="587"/>
        <end position="609"/>
    </location>
</feature>
<feature type="zinc finger region" description="C2H2-type 14" evidence="1">
    <location>
        <begin position="615"/>
        <end position="637"/>
    </location>
</feature>
<feature type="zinc finger region" description="C2H2-type 15" evidence="1">
    <location>
        <begin position="643"/>
        <end position="665"/>
    </location>
</feature>
<feature type="zinc finger region" description="C2H2-type 16" evidence="1">
    <location>
        <begin position="671"/>
        <end position="693"/>
    </location>
</feature>
<feature type="zinc finger region" description="C2H2-type 17" evidence="1">
    <location>
        <begin position="699"/>
        <end position="721"/>
    </location>
</feature>
<feature type="zinc finger region" description="C2H2-type 18" evidence="1">
    <location>
        <begin position="727"/>
        <end position="749"/>
    </location>
</feature>
<feature type="zinc finger region" description="C2H2-type 19" evidence="1">
    <location>
        <begin position="755"/>
        <end position="777"/>
    </location>
</feature>
<feature type="region of interest" description="Disordered" evidence="3">
    <location>
        <begin position="781"/>
        <end position="803"/>
    </location>
</feature>
<feature type="compositionally biased region" description="Basic and acidic residues" evidence="3">
    <location>
        <begin position="791"/>
        <end position="803"/>
    </location>
</feature>
<feature type="splice variant" id="VSP_046853" description="In isoform 2." evidence="4">
    <original>GEKNQSKLITVQDRES</original>
    <variation>DTLLVKALLLYDLAQT</variation>
    <location>
        <begin position="79"/>
        <end position="94"/>
    </location>
</feature>
<feature type="splice variant" id="VSP_046854" description="In isoform 2." evidence="4">
    <location>
        <begin position="95"/>
        <end position="803"/>
    </location>
</feature>
<feature type="sequence conflict" description="In Ref. 1; AAF34786." evidence="5" ref="1">
    <original>K</original>
    <variation>E</variation>
    <location>
        <position position="195"/>
    </location>
</feature>
<proteinExistence type="evidence at protein level"/>